<feature type="chain" id="PRO_0000366826" description="Ribosomal RNA large subunit methyltransferase K/L">
    <location>
        <begin position="1"/>
        <end position="711"/>
    </location>
</feature>
<feature type="domain" description="THUMP" evidence="1">
    <location>
        <begin position="43"/>
        <end position="154"/>
    </location>
</feature>
<dbReference type="EC" id="2.1.1.173" evidence="1"/>
<dbReference type="EC" id="2.1.1.264" evidence="1"/>
<dbReference type="EMBL" id="CP000606">
    <property type="protein sequence ID" value="ABO23678.1"/>
    <property type="molecule type" value="Genomic_DNA"/>
</dbReference>
<dbReference type="RefSeq" id="WP_011865610.1">
    <property type="nucleotide sequence ID" value="NC_009092.1"/>
</dbReference>
<dbReference type="SMR" id="A3QDY0"/>
<dbReference type="STRING" id="323850.Shew_1812"/>
<dbReference type="KEGG" id="slo:Shew_1812"/>
<dbReference type="eggNOG" id="COG0116">
    <property type="taxonomic scope" value="Bacteria"/>
</dbReference>
<dbReference type="eggNOG" id="COG1092">
    <property type="taxonomic scope" value="Bacteria"/>
</dbReference>
<dbReference type="HOGENOM" id="CLU_014042_2_0_6"/>
<dbReference type="OrthoDB" id="9809404at2"/>
<dbReference type="Proteomes" id="UP000001558">
    <property type="component" value="Chromosome"/>
</dbReference>
<dbReference type="GO" id="GO:0005737">
    <property type="term" value="C:cytoplasm"/>
    <property type="evidence" value="ECO:0007669"/>
    <property type="project" value="UniProtKB-SubCell"/>
</dbReference>
<dbReference type="GO" id="GO:0052915">
    <property type="term" value="F:23S rRNA (guanine(2445)-N(2))-methyltransferase activity"/>
    <property type="evidence" value="ECO:0007669"/>
    <property type="project" value="UniProtKB-UniRule"/>
</dbReference>
<dbReference type="GO" id="GO:0003723">
    <property type="term" value="F:RNA binding"/>
    <property type="evidence" value="ECO:0007669"/>
    <property type="project" value="UniProtKB-KW"/>
</dbReference>
<dbReference type="GO" id="GO:0070043">
    <property type="term" value="F:rRNA (guanine-N7-)-methyltransferase activity"/>
    <property type="evidence" value="ECO:0007669"/>
    <property type="project" value="UniProtKB-UniRule"/>
</dbReference>
<dbReference type="CDD" id="cd02440">
    <property type="entry name" value="AdoMet_MTases"/>
    <property type="match status" value="1"/>
</dbReference>
<dbReference type="CDD" id="cd11715">
    <property type="entry name" value="THUMP_AdoMetMT"/>
    <property type="match status" value="1"/>
</dbReference>
<dbReference type="FunFam" id="3.40.50.150:FF:000039">
    <property type="entry name" value="Ribosomal RNA large subunit methyltransferase K/L"/>
    <property type="match status" value="1"/>
</dbReference>
<dbReference type="Gene3D" id="3.30.2130.30">
    <property type="match status" value="1"/>
</dbReference>
<dbReference type="Gene3D" id="3.30.750.80">
    <property type="entry name" value="RNA methyltransferase domain (HRMD) like"/>
    <property type="match status" value="1"/>
</dbReference>
<dbReference type="Gene3D" id="3.40.50.150">
    <property type="entry name" value="Vaccinia Virus protein VP39"/>
    <property type="match status" value="2"/>
</dbReference>
<dbReference type="HAMAP" id="MF_01858">
    <property type="entry name" value="23SrRNA_methyltr_KL"/>
    <property type="match status" value="1"/>
</dbReference>
<dbReference type="InterPro" id="IPR017244">
    <property type="entry name" value="23SrRNA_methyltr_KL"/>
</dbReference>
<dbReference type="InterPro" id="IPR002052">
    <property type="entry name" value="DNA_methylase_N6_adenine_CS"/>
</dbReference>
<dbReference type="InterPro" id="IPR000241">
    <property type="entry name" value="RlmKL-like_Mtase"/>
</dbReference>
<dbReference type="InterPro" id="IPR053943">
    <property type="entry name" value="RlmKL-like_Mtase_CS"/>
</dbReference>
<dbReference type="InterPro" id="IPR054170">
    <property type="entry name" value="RlmL_1st"/>
</dbReference>
<dbReference type="InterPro" id="IPR019614">
    <property type="entry name" value="SAM-dep_methyl-trfase"/>
</dbReference>
<dbReference type="InterPro" id="IPR029063">
    <property type="entry name" value="SAM-dependent_MTases_sf"/>
</dbReference>
<dbReference type="InterPro" id="IPR004114">
    <property type="entry name" value="THUMP_dom"/>
</dbReference>
<dbReference type="NCBIfam" id="NF008748">
    <property type="entry name" value="PRK11783.1"/>
    <property type="match status" value="1"/>
</dbReference>
<dbReference type="PANTHER" id="PTHR47313">
    <property type="entry name" value="RIBOSOMAL RNA LARGE SUBUNIT METHYLTRANSFERASE K/L"/>
    <property type="match status" value="1"/>
</dbReference>
<dbReference type="PANTHER" id="PTHR47313:SF1">
    <property type="entry name" value="RIBOSOMAL RNA LARGE SUBUNIT METHYLTRANSFERASE K_L"/>
    <property type="match status" value="1"/>
</dbReference>
<dbReference type="Pfam" id="PF10672">
    <property type="entry name" value="Methyltrans_SAM"/>
    <property type="match status" value="1"/>
</dbReference>
<dbReference type="Pfam" id="PF22020">
    <property type="entry name" value="RlmL_1st"/>
    <property type="match status" value="1"/>
</dbReference>
<dbReference type="Pfam" id="PF02926">
    <property type="entry name" value="THUMP"/>
    <property type="match status" value="1"/>
</dbReference>
<dbReference type="Pfam" id="PF01170">
    <property type="entry name" value="UPF0020"/>
    <property type="match status" value="1"/>
</dbReference>
<dbReference type="PIRSF" id="PIRSF037618">
    <property type="entry name" value="RNA_Mtase_bacteria_prd"/>
    <property type="match status" value="1"/>
</dbReference>
<dbReference type="SMART" id="SM00981">
    <property type="entry name" value="THUMP"/>
    <property type="match status" value="1"/>
</dbReference>
<dbReference type="SUPFAM" id="SSF53335">
    <property type="entry name" value="S-adenosyl-L-methionine-dependent methyltransferases"/>
    <property type="match status" value="2"/>
</dbReference>
<dbReference type="PROSITE" id="PS51165">
    <property type="entry name" value="THUMP"/>
    <property type="match status" value="1"/>
</dbReference>
<dbReference type="PROSITE" id="PS01261">
    <property type="entry name" value="UPF0020"/>
    <property type="match status" value="1"/>
</dbReference>
<accession>A3QDY0</accession>
<reference key="1">
    <citation type="submission" date="2007-03" db="EMBL/GenBank/DDBJ databases">
        <title>Complete sequence of Shewanella loihica PV-4.</title>
        <authorList>
            <consortium name="US DOE Joint Genome Institute"/>
            <person name="Copeland A."/>
            <person name="Lucas S."/>
            <person name="Lapidus A."/>
            <person name="Barry K."/>
            <person name="Detter J.C."/>
            <person name="Glavina del Rio T."/>
            <person name="Hammon N."/>
            <person name="Israni S."/>
            <person name="Dalin E."/>
            <person name="Tice H."/>
            <person name="Pitluck S."/>
            <person name="Chain P."/>
            <person name="Malfatti S."/>
            <person name="Shin M."/>
            <person name="Vergez L."/>
            <person name="Schmutz J."/>
            <person name="Larimer F."/>
            <person name="Land M."/>
            <person name="Hauser L."/>
            <person name="Kyrpides N."/>
            <person name="Mikhailova N."/>
            <person name="Romine M.F."/>
            <person name="Serres G."/>
            <person name="Fredrickson J."/>
            <person name="Tiedje J."/>
            <person name="Richardson P."/>
        </authorList>
    </citation>
    <scope>NUCLEOTIDE SEQUENCE [LARGE SCALE GENOMIC DNA]</scope>
    <source>
        <strain>ATCC BAA-1088 / PV-4</strain>
    </source>
</reference>
<sequence>MLNFFAAAPRGYEYALSLELAEFGAAEIKESVAGVYFSAPLNLAYRITLWSRLASRIILVIYKGPCENPEQLYNAAYCIDWQTHFSNKSSFSIDFHGVGGFIKNSQFGALKIKDAVVDRFRDDGCPRPDVARVDADFKIDAHYRRGQITLGINFSGPALHQRGYRSTTGEAPLKENLAANMLVRSGWQQSPKDLLDPFCGSGTILIEAAMMACDIAPALQRRRFGFEHWLRHQEADWQELLAEAKARASIGTKRCEIKFYGSDIDSRLVALAKRNAQNAGVAELIELSVSNALNVTPPVEQGYLITNPPYGERLGNVTSLLQLYYQLGDKLKAEFGGWQVAVLNSDIELLSALKLKADKQMKMYNGALECAFNLYTLHANSTRRLDPSQVLSQGGEVSEVATAFSNRIKKNHKQLSKWAQREGIDSYRLYDADIPEYNVAVDIYLDHVVIQEYSAPKSIPEAVTKRRLTDVLLVLPQAIGVDPDKIILKTRERQKGTNQYQKLDATKLELVTTEYGAKFKLNLKDYLDTGLFLDHRLTRKLVGEKSKGRDVLNLFAYTGSASVHAALGGAKSVTTVDMSNTYLNWAQDNFELNGLKGKQYQFIQGDCLQWIDDCDQQYDLIFIDPPTFSNSKRMEDSFDVQRDHVKLLSALVKLLRPGGEILFSNNKRKFKMDSEALSALGLSITNLDKQTLPLDYKRNPHIHNTWLIQHA</sequence>
<protein>
    <recommendedName>
        <fullName evidence="1">Ribosomal RNA large subunit methyltransferase K/L</fullName>
    </recommendedName>
    <domain>
        <recommendedName>
            <fullName evidence="1">23S rRNA m2G2445 methyltransferase</fullName>
            <ecNumber evidence="1">2.1.1.173</ecNumber>
        </recommendedName>
        <alternativeName>
            <fullName evidence="1">rRNA (guanine-N(2)-)-methyltransferase RlmL</fullName>
        </alternativeName>
    </domain>
    <domain>
        <recommendedName>
            <fullName evidence="1">23S rRNA m7G2069 methyltransferase</fullName>
            <ecNumber evidence="1">2.1.1.264</ecNumber>
        </recommendedName>
        <alternativeName>
            <fullName evidence="1">rRNA (guanine-N(7)-)-methyltransferase RlmK</fullName>
        </alternativeName>
    </domain>
</protein>
<name>RLMKL_SHELP</name>
<proteinExistence type="inferred from homology"/>
<keyword id="KW-0963">Cytoplasm</keyword>
<keyword id="KW-0489">Methyltransferase</keyword>
<keyword id="KW-1185">Reference proteome</keyword>
<keyword id="KW-0694">RNA-binding</keyword>
<keyword id="KW-0698">rRNA processing</keyword>
<keyword id="KW-0949">S-adenosyl-L-methionine</keyword>
<keyword id="KW-0808">Transferase</keyword>
<organism>
    <name type="scientific">Shewanella loihica (strain ATCC BAA-1088 / PV-4)</name>
    <dbReference type="NCBI Taxonomy" id="323850"/>
    <lineage>
        <taxon>Bacteria</taxon>
        <taxon>Pseudomonadati</taxon>
        <taxon>Pseudomonadota</taxon>
        <taxon>Gammaproteobacteria</taxon>
        <taxon>Alteromonadales</taxon>
        <taxon>Shewanellaceae</taxon>
        <taxon>Shewanella</taxon>
    </lineage>
</organism>
<gene>
    <name evidence="1" type="primary">rlmL</name>
    <name type="ordered locus">Shew_1812</name>
</gene>
<comment type="function">
    <text evidence="1">Specifically methylates the guanine in position 2445 (m2G2445) and the guanine in position 2069 (m7G2069) of 23S rRNA.</text>
</comment>
<comment type="catalytic activity">
    <reaction evidence="1">
        <text>guanosine(2445) in 23S rRNA + S-adenosyl-L-methionine = N(2)-methylguanosine(2445) in 23S rRNA + S-adenosyl-L-homocysteine + H(+)</text>
        <dbReference type="Rhea" id="RHEA:42740"/>
        <dbReference type="Rhea" id="RHEA-COMP:10215"/>
        <dbReference type="Rhea" id="RHEA-COMP:10216"/>
        <dbReference type="ChEBI" id="CHEBI:15378"/>
        <dbReference type="ChEBI" id="CHEBI:57856"/>
        <dbReference type="ChEBI" id="CHEBI:59789"/>
        <dbReference type="ChEBI" id="CHEBI:74269"/>
        <dbReference type="ChEBI" id="CHEBI:74481"/>
        <dbReference type="EC" id="2.1.1.173"/>
    </reaction>
</comment>
<comment type="catalytic activity">
    <reaction evidence="1">
        <text>guanosine(2069) in 23S rRNA + S-adenosyl-L-methionine = N(2)-methylguanosine(2069) in 23S rRNA + S-adenosyl-L-homocysteine + H(+)</text>
        <dbReference type="Rhea" id="RHEA:43772"/>
        <dbReference type="Rhea" id="RHEA-COMP:10688"/>
        <dbReference type="Rhea" id="RHEA-COMP:10689"/>
        <dbReference type="ChEBI" id="CHEBI:15378"/>
        <dbReference type="ChEBI" id="CHEBI:57856"/>
        <dbReference type="ChEBI" id="CHEBI:59789"/>
        <dbReference type="ChEBI" id="CHEBI:74269"/>
        <dbReference type="ChEBI" id="CHEBI:74481"/>
        <dbReference type="EC" id="2.1.1.264"/>
    </reaction>
</comment>
<comment type="subcellular location">
    <subcellularLocation>
        <location evidence="1">Cytoplasm</location>
    </subcellularLocation>
</comment>
<comment type="similarity">
    <text evidence="1">Belongs to the methyltransferase superfamily. RlmKL family.</text>
</comment>
<evidence type="ECO:0000255" key="1">
    <source>
        <dbReference type="HAMAP-Rule" id="MF_01858"/>
    </source>
</evidence>